<accession>A5I7P8</accession>
<accession>A7G8Y0</accession>
<dbReference type="EC" id="2.7.1.33" evidence="1"/>
<dbReference type="EMBL" id="CP000727">
    <property type="protein sequence ID" value="ABS37819.1"/>
    <property type="molecule type" value="Genomic_DNA"/>
</dbReference>
<dbReference type="EMBL" id="AM412317">
    <property type="protein sequence ID" value="CAL85083.1"/>
    <property type="molecule type" value="Genomic_DNA"/>
</dbReference>
<dbReference type="RefSeq" id="WP_003359441.1">
    <property type="nucleotide sequence ID" value="NC_009698.1"/>
</dbReference>
<dbReference type="RefSeq" id="YP_001256004.1">
    <property type="nucleotide sequence ID" value="NC_009495.1"/>
</dbReference>
<dbReference type="RefSeq" id="YP_001389245.1">
    <property type="nucleotide sequence ID" value="NC_009698.1"/>
</dbReference>
<dbReference type="SMR" id="A5I7P8"/>
<dbReference type="GeneID" id="5187771"/>
<dbReference type="KEGG" id="cbh:CLC_3486"/>
<dbReference type="KEGG" id="cbo:CBO3522"/>
<dbReference type="PATRIC" id="fig|413999.7.peg.3500"/>
<dbReference type="HOGENOM" id="CLU_066627_1_0_9"/>
<dbReference type="UniPathway" id="UPA00241">
    <property type="reaction ID" value="UER00352"/>
</dbReference>
<dbReference type="PRO" id="PR:A5I7P8"/>
<dbReference type="Proteomes" id="UP000001986">
    <property type="component" value="Chromosome"/>
</dbReference>
<dbReference type="GO" id="GO:0005737">
    <property type="term" value="C:cytoplasm"/>
    <property type="evidence" value="ECO:0007669"/>
    <property type="project" value="UniProtKB-SubCell"/>
</dbReference>
<dbReference type="GO" id="GO:0005524">
    <property type="term" value="F:ATP binding"/>
    <property type="evidence" value="ECO:0007669"/>
    <property type="project" value="UniProtKB-UniRule"/>
</dbReference>
<dbReference type="GO" id="GO:0046872">
    <property type="term" value="F:metal ion binding"/>
    <property type="evidence" value="ECO:0007669"/>
    <property type="project" value="UniProtKB-KW"/>
</dbReference>
<dbReference type="GO" id="GO:0004594">
    <property type="term" value="F:pantothenate kinase activity"/>
    <property type="evidence" value="ECO:0007669"/>
    <property type="project" value="UniProtKB-UniRule"/>
</dbReference>
<dbReference type="GO" id="GO:0015937">
    <property type="term" value="P:coenzyme A biosynthetic process"/>
    <property type="evidence" value="ECO:0007669"/>
    <property type="project" value="UniProtKB-UniRule"/>
</dbReference>
<dbReference type="CDD" id="cd24015">
    <property type="entry name" value="ASKHA_NBD_PanK-III"/>
    <property type="match status" value="1"/>
</dbReference>
<dbReference type="Gene3D" id="3.30.420.40">
    <property type="match status" value="2"/>
</dbReference>
<dbReference type="HAMAP" id="MF_01274">
    <property type="entry name" value="Pantothen_kinase_3"/>
    <property type="match status" value="1"/>
</dbReference>
<dbReference type="InterPro" id="IPR043129">
    <property type="entry name" value="ATPase_NBD"/>
</dbReference>
<dbReference type="InterPro" id="IPR004619">
    <property type="entry name" value="Type_III_PanK"/>
</dbReference>
<dbReference type="NCBIfam" id="TIGR00671">
    <property type="entry name" value="baf"/>
    <property type="match status" value="1"/>
</dbReference>
<dbReference type="NCBIfam" id="NF009847">
    <property type="entry name" value="PRK13318.1-5"/>
    <property type="match status" value="1"/>
</dbReference>
<dbReference type="NCBIfam" id="NF009848">
    <property type="entry name" value="PRK13318.1-6"/>
    <property type="match status" value="1"/>
</dbReference>
<dbReference type="NCBIfam" id="NF009855">
    <property type="entry name" value="PRK13321.1"/>
    <property type="match status" value="1"/>
</dbReference>
<dbReference type="PANTHER" id="PTHR34265">
    <property type="entry name" value="TYPE III PANTOTHENATE KINASE"/>
    <property type="match status" value="1"/>
</dbReference>
<dbReference type="PANTHER" id="PTHR34265:SF1">
    <property type="entry name" value="TYPE III PANTOTHENATE KINASE"/>
    <property type="match status" value="1"/>
</dbReference>
<dbReference type="Pfam" id="PF03309">
    <property type="entry name" value="Pan_kinase"/>
    <property type="match status" value="1"/>
</dbReference>
<dbReference type="SUPFAM" id="SSF53067">
    <property type="entry name" value="Actin-like ATPase domain"/>
    <property type="match status" value="2"/>
</dbReference>
<evidence type="ECO:0000255" key="1">
    <source>
        <dbReference type="HAMAP-Rule" id="MF_01274"/>
    </source>
</evidence>
<organism>
    <name type="scientific">Clostridium botulinum (strain Hall / ATCC 3502 / NCTC 13319 / Type A)</name>
    <dbReference type="NCBI Taxonomy" id="441771"/>
    <lineage>
        <taxon>Bacteria</taxon>
        <taxon>Bacillati</taxon>
        <taxon>Bacillota</taxon>
        <taxon>Clostridia</taxon>
        <taxon>Eubacteriales</taxon>
        <taxon>Clostridiaceae</taxon>
        <taxon>Clostridium</taxon>
    </lineage>
</organism>
<comment type="function">
    <text evidence="1">Catalyzes the phosphorylation of pantothenate (Pan), the first step in CoA biosynthesis.</text>
</comment>
<comment type="catalytic activity">
    <reaction evidence="1">
        <text>(R)-pantothenate + ATP = (R)-4'-phosphopantothenate + ADP + H(+)</text>
        <dbReference type="Rhea" id="RHEA:16373"/>
        <dbReference type="ChEBI" id="CHEBI:10986"/>
        <dbReference type="ChEBI" id="CHEBI:15378"/>
        <dbReference type="ChEBI" id="CHEBI:29032"/>
        <dbReference type="ChEBI" id="CHEBI:30616"/>
        <dbReference type="ChEBI" id="CHEBI:456216"/>
        <dbReference type="EC" id="2.7.1.33"/>
    </reaction>
</comment>
<comment type="cofactor">
    <cofactor evidence="1">
        <name>NH4(+)</name>
        <dbReference type="ChEBI" id="CHEBI:28938"/>
    </cofactor>
    <cofactor evidence="1">
        <name>K(+)</name>
        <dbReference type="ChEBI" id="CHEBI:29103"/>
    </cofactor>
    <text evidence="1">A monovalent cation. Ammonium or potassium.</text>
</comment>
<comment type="pathway">
    <text evidence="1">Cofactor biosynthesis; coenzyme A biosynthesis; CoA from (R)-pantothenate: step 1/5.</text>
</comment>
<comment type="subunit">
    <text evidence="1">Homodimer.</text>
</comment>
<comment type="subcellular location">
    <subcellularLocation>
        <location evidence="1">Cytoplasm</location>
    </subcellularLocation>
</comment>
<comment type="similarity">
    <text evidence="1">Belongs to the type III pantothenate kinase family.</text>
</comment>
<gene>
    <name evidence="1" type="primary">coaX</name>
    <name type="ordered locus">CBO3522</name>
    <name type="ordered locus">CLC_3486</name>
</gene>
<protein>
    <recommendedName>
        <fullName evidence="1">Type III pantothenate kinase</fullName>
        <ecNumber evidence="1">2.7.1.33</ecNumber>
    </recommendedName>
    <alternativeName>
        <fullName evidence="1">PanK-III</fullName>
    </alternativeName>
    <alternativeName>
        <fullName evidence="1">Pantothenic acid kinase</fullName>
    </alternativeName>
</protein>
<name>COAX_CLOBH</name>
<reference key="1">
    <citation type="journal article" date="2007" name="Genome Res.">
        <title>Genome sequence of a proteolytic (Group I) Clostridium botulinum strain Hall A and comparative analysis of the clostridial genomes.</title>
        <authorList>
            <person name="Sebaihia M."/>
            <person name="Peck M.W."/>
            <person name="Minton N.P."/>
            <person name="Thomson N.R."/>
            <person name="Holden M.T.G."/>
            <person name="Mitchell W.J."/>
            <person name="Carter A.T."/>
            <person name="Bentley S.D."/>
            <person name="Mason D.R."/>
            <person name="Crossman L."/>
            <person name="Paul C.J."/>
            <person name="Ivens A."/>
            <person name="Wells-Bennik M.H.J."/>
            <person name="Davis I.J."/>
            <person name="Cerdeno-Tarraga A.M."/>
            <person name="Churcher C."/>
            <person name="Quail M.A."/>
            <person name="Chillingworth T."/>
            <person name="Feltwell T."/>
            <person name="Fraser A."/>
            <person name="Goodhead I."/>
            <person name="Hance Z."/>
            <person name="Jagels K."/>
            <person name="Larke N."/>
            <person name="Maddison M."/>
            <person name="Moule S."/>
            <person name="Mungall K."/>
            <person name="Norbertczak H."/>
            <person name="Rabbinowitsch E."/>
            <person name="Sanders M."/>
            <person name="Simmonds M."/>
            <person name="White B."/>
            <person name="Whithead S."/>
            <person name="Parkhill J."/>
        </authorList>
    </citation>
    <scope>NUCLEOTIDE SEQUENCE [LARGE SCALE GENOMIC DNA]</scope>
    <source>
        <strain>Hall / ATCC 3502 / NCTC 13319 / Type A</strain>
    </source>
</reference>
<reference key="2">
    <citation type="journal article" date="2007" name="PLoS ONE">
        <title>Analysis of the neurotoxin complex genes in Clostridium botulinum A1-A4 and B1 strains: BoNT/A3, /Ba4 and /B1 clusters are located within plasmids.</title>
        <authorList>
            <person name="Smith T.J."/>
            <person name="Hill K.K."/>
            <person name="Foley B.T."/>
            <person name="Detter J.C."/>
            <person name="Munk A.C."/>
            <person name="Bruce D.C."/>
            <person name="Doggett N.A."/>
            <person name="Smith L.A."/>
            <person name="Marks J.D."/>
            <person name="Xie G."/>
            <person name="Brettin T.S."/>
        </authorList>
    </citation>
    <scope>NUCLEOTIDE SEQUENCE [LARGE SCALE GENOMIC DNA]</scope>
    <source>
        <strain>Hall / ATCC 3502 / NCTC 13319 / Type A</strain>
    </source>
</reference>
<proteinExistence type="inferred from homology"/>
<feature type="chain" id="PRO_1000054370" description="Type III pantothenate kinase">
    <location>
        <begin position="1"/>
        <end position="258"/>
    </location>
</feature>
<feature type="active site" description="Proton acceptor" evidence="1">
    <location>
        <position position="109"/>
    </location>
</feature>
<feature type="binding site" evidence="1">
    <location>
        <begin position="6"/>
        <end position="13"/>
    </location>
    <ligand>
        <name>ATP</name>
        <dbReference type="ChEBI" id="CHEBI:30616"/>
    </ligand>
</feature>
<feature type="binding site" evidence="1">
    <location>
        <position position="100"/>
    </location>
    <ligand>
        <name>substrate</name>
    </ligand>
</feature>
<feature type="binding site" evidence="1">
    <location>
        <begin position="107"/>
        <end position="110"/>
    </location>
    <ligand>
        <name>substrate</name>
    </ligand>
</feature>
<feature type="binding site" evidence="1">
    <location>
        <position position="129"/>
    </location>
    <ligand>
        <name>K(+)</name>
        <dbReference type="ChEBI" id="CHEBI:29103"/>
    </ligand>
</feature>
<feature type="binding site" evidence="1">
    <location>
        <position position="132"/>
    </location>
    <ligand>
        <name>ATP</name>
        <dbReference type="ChEBI" id="CHEBI:30616"/>
    </ligand>
</feature>
<feature type="binding site" evidence="1">
    <location>
        <position position="184"/>
    </location>
    <ligand>
        <name>substrate</name>
    </ligand>
</feature>
<sequence length="258" mass="28309">MILVLDVGNTNIVLGIYKNKELIANWRLATDNKRTADEYGIQVIELFSHNNLSFSDIEGVIISSVVPNIMYSLEHMISKYFNIKPIIVGPGVKTGINIKYDNPKEVGADRIVNAVAAHEIYKKPLIIIDFGTATTFCAVTKEANYLGGTICPGIKISSDALFDKAAKLPRVELVKTPGVICKNTVASIQSGIIYGYAGQVDYIVSKMKKEMMDLGEEEPFVVATGGFAKLISEESKSIDEINAILTLEGLRVIYEKNK</sequence>
<keyword id="KW-0067">ATP-binding</keyword>
<keyword id="KW-0173">Coenzyme A biosynthesis</keyword>
<keyword id="KW-0963">Cytoplasm</keyword>
<keyword id="KW-0418">Kinase</keyword>
<keyword id="KW-0479">Metal-binding</keyword>
<keyword id="KW-0547">Nucleotide-binding</keyword>
<keyword id="KW-0630">Potassium</keyword>
<keyword id="KW-1185">Reference proteome</keyword>
<keyword id="KW-0808">Transferase</keyword>